<organism>
    <name type="scientific">Escherichia coli O157:H7</name>
    <dbReference type="NCBI Taxonomy" id="83334"/>
    <lineage>
        <taxon>Bacteria</taxon>
        <taxon>Pseudomonadati</taxon>
        <taxon>Pseudomonadota</taxon>
        <taxon>Gammaproteobacteria</taxon>
        <taxon>Enterobacterales</taxon>
        <taxon>Enterobacteriaceae</taxon>
        <taxon>Escherichia</taxon>
    </lineage>
</organism>
<keyword id="KW-0413">Isomerase</keyword>
<keyword id="KW-0658">Purine biosynthesis</keyword>
<keyword id="KW-1185">Reference proteome</keyword>
<protein>
    <recommendedName>
        <fullName evidence="2">N5-carboxyaminoimidazole ribonucleotide mutase</fullName>
        <shortName evidence="2">N5-CAIR mutase</shortName>
        <ecNumber evidence="2">5.4.99.18</ecNumber>
    </recommendedName>
    <alternativeName>
        <fullName evidence="2">5-(carboxyamino)imidazole ribonucleotide mutase</fullName>
    </alternativeName>
</protein>
<feature type="initiator methionine" description="Removed" evidence="1">
    <location>
        <position position="1"/>
    </location>
</feature>
<feature type="chain" id="PRO_0000074974" description="N5-carboxyaminoimidazole ribonucleotide mutase">
    <location>
        <begin position="2"/>
        <end position="169"/>
    </location>
</feature>
<feature type="binding site" evidence="2">
    <location>
        <position position="16"/>
    </location>
    <ligand>
        <name>substrate</name>
    </ligand>
</feature>
<feature type="binding site" evidence="2">
    <location>
        <position position="19"/>
    </location>
    <ligand>
        <name>substrate</name>
    </ligand>
</feature>
<feature type="binding site" evidence="2">
    <location>
        <position position="46"/>
    </location>
    <ligand>
        <name>substrate</name>
    </ligand>
</feature>
<sequence>MSSRNNPARVAIVMGSKSDWATMQFAAEIFEILNVPHHVEVVSAHRTPDKLFSFAESAEENGYQVIIAGAGGAAHLPGMIAAKTLVPVLGVPVQSAALSGVDSLYSIVQMPRGIPVGTLAIGKAGAANAALLAAQILATHDKELHQRLNDWRKAQTDEVLENPDPRGAA</sequence>
<gene>
    <name evidence="2" type="primary">purE</name>
    <name type="ordered locus">Z0678</name>
    <name type="ordered locus">ECs0585</name>
</gene>
<evidence type="ECO:0000250" key="1"/>
<evidence type="ECO:0000255" key="2">
    <source>
        <dbReference type="HAMAP-Rule" id="MF_01929"/>
    </source>
</evidence>
<proteinExistence type="inferred from homology"/>
<reference key="1">
    <citation type="journal article" date="2001" name="Nature">
        <title>Genome sequence of enterohaemorrhagic Escherichia coli O157:H7.</title>
        <authorList>
            <person name="Perna N.T."/>
            <person name="Plunkett G. III"/>
            <person name="Burland V."/>
            <person name="Mau B."/>
            <person name="Glasner J.D."/>
            <person name="Rose D.J."/>
            <person name="Mayhew G.F."/>
            <person name="Evans P.S."/>
            <person name="Gregor J."/>
            <person name="Kirkpatrick H.A."/>
            <person name="Posfai G."/>
            <person name="Hackett J."/>
            <person name="Klink S."/>
            <person name="Boutin A."/>
            <person name="Shao Y."/>
            <person name="Miller L."/>
            <person name="Grotbeck E.J."/>
            <person name="Davis N.W."/>
            <person name="Lim A."/>
            <person name="Dimalanta E.T."/>
            <person name="Potamousis K."/>
            <person name="Apodaca J."/>
            <person name="Anantharaman T.S."/>
            <person name="Lin J."/>
            <person name="Yen G."/>
            <person name="Schwartz D.C."/>
            <person name="Welch R.A."/>
            <person name="Blattner F.R."/>
        </authorList>
    </citation>
    <scope>NUCLEOTIDE SEQUENCE [LARGE SCALE GENOMIC DNA]</scope>
    <source>
        <strain>O157:H7 / EDL933 / ATCC 700927 / EHEC</strain>
    </source>
</reference>
<reference key="2">
    <citation type="journal article" date="2001" name="DNA Res.">
        <title>Complete genome sequence of enterohemorrhagic Escherichia coli O157:H7 and genomic comparison with a laboratory strain K-12.</title>
        <authorList>
            <person name="Hayashi T."/>
            <person name="Makino K."/>
            <person name="Ohnishi M."/>
            <person name="Kurokawa K."/>
            <person name="Ishii K."/>
            <person name="Yokoyama K."/>
            <person name="Han C.-G."/>
            <person name="Ohtsubo E."/>
            <person name="Nakayama K."/>
            <person name="Murata T."/>
            <person name="Tanaka M."/>
            <person name="Tobe T."/>
            <person name="Iida T."/>
            <person name="Takami H."/>
            <person name="Honda T."/>
            <person name="Sasakawa C."/>
            <person name="Ogasawara N."/>
            <person name="Yasunaga T."/>
            <person name="Kuhara S."/>
            <person name="Shiba T."/>
            <person name="Hattori M."/>
            <person name="Shinagawa H."/>
        </authorList>
    </citation>
    <scope>NUCLEOTIDE SEQUENCE [LARGE SCALE GENOMIC DNA]</scope>
    <source>
        <strain>O157:H7 / Sakai / RIMD 0509952 / EHEC</strain>
    </source>
</reference>
<name>PURE_ECO57</name>
<dbReference type="EC" id="5.4.99.18" evidence="2"/>
<dbReference type="EMBL" id="AE005174">
    <property type="protein sequence ID" value="AAG54880.1"/>
    <property type="molecule type" value="Genomic_DNA"/>
</dbReference>
<dbReference type="EMBL" id="BA000007">
    <property type="protein sequence ID" value="BAB34008.1"/>
    <property type="molecule type" value="Genomic_DNA"/>
</dbReference>
<dbReference type="PIR" id="A90702">
    <property type="entry name" value="A90702"/>
</dbReference>
<dbReference type="PIR" id="D85552">
    <property type="entry name" value="D85552"/>
</dbReference>
<dbReference type="RefSeq" id="NP_308612.1">
    <property type="nucleotide sequence ID" value="NC_002695.1"/>
</dbReference>
<dbReference type="RefSeq" id="WP_001295318.1">
    <property type="nucleotide sequence ID" value="NZ_VOAI01000030.1"/>
</dbReference>
<dbReference type="SMR" id="P0AG19"/>
<dbReference type="STRING" id="155864.Z0678"/>
<dbReference type="GeneID" id="86945437"/>
<dbReference type="GeneID" id="916940"/>
<dbReference type="KEGG" id="ece:Z0678"/>
<dbReference type="KEGG" id="ecs:ECs_0585"/>
<dbReference type="PATRIC" id="fig|386585.9.peg.692"/>
<dbReference type="eggNOG" id="COG0041">
    <property type="taxonomic scope" value="Bacteria"/>
</dbReference>
<dbReference type="HOGENOM" id="CLU_094982_2_2_6"/>
<dbReference type="OMA" id="SDWPVME"/>
<dbReference type="UniPathway" id="UPA00074">
    <property type="reaction ID" value="UER00943"/>
</dbReference>
<dbReference type="Proteomes" id="UP000000558">
    <property type="component" value="Chromosome"/>
</dbReference>
<dbReference type="Proteomes" id="UP000002519">
    <property type="component" value="Chromosome"/>
</dbReference>
<dbReference type="GO" id="GO:0034023">
    <property type="term" value="F:5-(carboxyamino)imidazole ribonucleotide mutase activity"/>
    <property type="evidence" value="ECO:0007669"/>
    <property type="project" value="UniProtKB-UniRule"/>
</dbReference>
<dbReference type="GO" id="GO:0006189">
    <property type="term" value="P:'de novo' IMP biosynthetic process"/>
    <property type="evidence" value="ECO:0007669"/>
    <property type="project" value="UniProtKB-UniRule"/>
</dbReference>
<dbReference type="FunFam" id="3.40.50.1970:FF:000004">
    <property type="entry name" value="N5-carboxyaminoimidazole ribonucleotide mutase"/>
    <property type="match status" value="1"/>
</dbReference>
<dbReference type="Gene3D" id="3.40.50.1970">
    <property type="match status" value="1"/>
</dbReference>
<dbReference type="HAMAP" id="MF_01929">
    <property type="entry name" value="PurE_classI"/>
    <property type="match status" value="1"/>
</dbReference>
<dbReference type="InterPro" id="IPR033747">
    <property type="entry name" value="PurE_ClassI"/>
</dbReference>
<dbReference type="InterPro" id="IPR000031">
    <property type="entry name" value="PurE_dom"/>
</dbReference>
<dbReference type="InterPro" id="IPR024694">
    <property type="entry name" value="PurE_prokaryotes"/>
</dbReference>
<dbReference type="NCBIfam" id="TIGR01162">
    <property type="entry name" value="purE"/>
    <property type="match status" value="1"/>
</dbReference>
<dbReference type="PANTHER" id="PTHR23046:SF2">
    <property type="entry name" value="PHOSPHORIBOSYLAMINOIMIDAZOLE CARBOXYLASE"/>
    <property type="match status" value="1"/>
</dbReference>
<dbReference type="PANTHER" id="PTHR23046">
    <property type="entry name" value="PHOSPHORIBOSYLAMINOIMIDAZOLE CARBOXYLASE CATALYTIC SUBUNIT"/>
    <property type="match status" value="1"/>
</dbReference>
<dbReference type="Pfam" id="PF00731">
    <property type="entry name" value="AIRC"/>
    <property type="match status" value="1"/>
</dbReference>
<dbReference type="PIRSF" id="PIRSF001338">
    <property type="entry name" value="AIR_carboxylase"/>
    <property type="match status" value="1"/>
</dbReference>
<dbReference type="SMART" id="SM01001">
    <property type="entry name" value="AIRC"/>
    <property type="match status" value="1"/>
</dbReference>
<dbReference type="SUPFAM" id="SSF52255">
    <property type="entry name" value="N5-CAIR mutase (phosphoribosylaminoimidazole carboxylase, PurE)"/>
    <property type="match status" value="1"/>
</dbReference>
<accession>P0AG19</accession>
<accession>P09028</accession>
<comment type="function">
    <text evidence="2">Catalyzes the conversion of N5-carboxyaminoimidazole ribonucleotide (N5-CAIR) to 4-carboxy-5-aminoimidazole ribonucleotide (CAIR).</text>
</comment>
<comment type="catalytic activity">
    <reaction evidence="2">
        <text>5-carboxyamino-1-(5-phospho-D-ribosyl)imidazole + H(+) = 5-amino-1-(5-phospho-D-ribosyl)imidazole-4-carboxylate</text>
        <dbReference type="Rhea" id="RHEA:13193"/>
        <dbReference type="ChEBI" id="CHEBI:15378"/>
        <dbReference type="ChEBI" id="CHEBI:58730"/>
        <dbReference type="ChEBI" id="CHEBI:77657"/>
        <dbReference type="EC" id="5.4.99.18"/>
    </reaction>
</comment>
<comment type="pathway">
    <text evidence="2">Purine metabolism; IMP biosynthesis via de novo pathway; 5-amino-1-(5-phospho-D-ribosyl)imidazole-4-carboxylate from 5-amino-1-(5-phospho-D-ribosyl)imidazole (N5-CAIR route): step 2/2.</text>
</comment>
<comment type="similarity">
    <text evidence="2">Belongs to the AIR carboxylase family. Class I subfamily.</text>
</comment>